<evidence type="ECO:0000255" key="1">
    <source>
        <dbReference type="HAMAP-Rule" id="MF_01588"/>
    </source>
</evidence>
<name>DNLJ_RHOPS</name>
<sequence>MISKSKTAAPDIDKLTKPKAKVELMRLRLAIEGHDKAYYQDDAPKIPDADYDALRRRLEAIEAKFPELLSASSPSQTVGAAPARGFSKVQHAVPMLSLGNAFSDDEVGEFVERVQRFLKLEDIPAIVAEPKIDGLSLSLRYENGTLVRAATRGDGFTGEDVTANVRTIADIPTTLKAKTIPAACELRGEVYMLKHDFLALNKRQEEAGDTVFANPRNSAAGSLRQKDVAITASRPLKFFAYAWGEMSDYPMESPTQHAMLAWLGDAGFTVNPEITLCHSVDDALAFYRRIGEQRAALPYDIDGVVYKVDRLDYQARLGFVSRSPRWAIAHKFAAEQAVTVLEKIDIQVGRTGALTPVARLQPVTVGGVVVQNATLHNEDYIKGVGSDGSPLRDGVDIREGDTVVVQRAGDVIPQIVTVVLDKRPADLPAYKFPHKCPVCGSHAAREEGEAVWRCTGALICPAQAVERLKHFVSRLAFDIDGLGEKQIVLFHERGWVREPADIFTLKARNAELKLEDLEGYGETSVRNLFAAIDARRNIELNRLIFALGIRHVGEGNAKLLARHYGSIDVFLAAMRAAAEGQTPEGNTSEAYQDLDNIAGIGDVVAEAVVEFFAEPRNVGALDALLREIEVLPVEQAKQDTAVAGKTVVFTGALTKFTRDEAKAAAERLGAKVAGSVSKKTDYVVAGEDAGSKLTKARDLGVAVLTEDEWLALIG</sequence>
<organism>
    <name type="scientific">Rhodopseudomonas palustris (strain BisB5)</name>
    <dbReference type="NCBI Taxonomy" id="316057"/>
    <lineage>
        <taxon>Bacteria</taxon>
        <taxon>Pseudomonadati</taxon>
        <taxon>Pseudomonadota</taxon>
        <taxon>Alphaproteobacteria</taxon>
        <taxon>Hyphomicrobiales</taxon>
        <taxon>Nitrobacteraceae</taxon>
        <taxon>Rhodopseudomonas</taxon>
    </lineage>
</organism>
<accession>Q133Y4</accession>
<gene>
    <name evidence="1" type="primary">ligA</name>
    <name type="ordered locus">RPD_3381</name>
</gene>
<reference key="1">
    <citation type="submission" date="2006-03" db="EMBL/GenBank/DDBJ databases">
        <title>Complete sequence of Rhodopseudomonas palustris BisB5.</title>
        <authorList>
            <consortium name="US DOE Joint Genome Institute"/>
            <person name="Copeland A."/>
            <person name="Lucas S."/>
            <person name="Lapidus A."/>
            <person name="Barry K."/>
            <person name="Detter J.C."/>
            <person name="Glavina del Rio T."/>
            <person name="Hammon N."/>
            <person name="Israni S."/>
            <person name="Dalin E."/>
            <person name="Tice H."/>
            <person name="Pitluck S."/>
            <person name="Chain P."/>
            <person name="Malfatti S."/>
            <person name="Shin M."/>
            <person name="Vergez L."/>
            <person name="Schmutz J."/>
            <person name="Larimer F."/>
            <person name="Land M."/>
            <person name="Hauser L."/>
            <person name="Pelletier D.A."/>
            <person name="Kyrpides N."/>
            <person name="Lykidis A."/>
            <person name="Oda Y."/>
            <person name="Harwood C.S."/>
            <person name="Richardson P."/>
        </authorList>
    </citation>
    <scope>NUCLEOTIDE SEQUENCE [LARGE SCALE GENOMIC DNA]</scope>
    <source>
        <strain>BisB5</strain>
    </source>
</reference>
<protein>
    <recommendedName>
        <fullName evidence="1">DNA ligase</fullName>
        <ecNumber evidence="1">6.5.1.2</ecNumber>
    </recommendedName>
    <alternativeName>
        <fullName evidence="1">Polydeoxyribonucleotide synthase [NAD(+)]</fullName>
    </alternativeName>
</protein>
<comment type="function">
    <text evidence="1">DNA ligase that catalyzes the formation of phosphodiester linkages between 5'-phosphoryl and 3'-hydroxyl groups in double-stranded DNA using NAD as a coenzyme and as the energy source for the reaction. It is essential for DNA replication and repair of damaged DNA.</text>
</comment>
<comment type="catalytic activity">
    <reaction evidence="1">
        <text>NAD(+) + (deoxyribonucleotide)n-3'-hydroxyl + 5'-phospho-(deoxyribonucleotide)m = (deoxyribonucleotide)n+m + AMP + beta-nicotinamide D-nucleotide.</text>
        <dbReference type="EC" id="6.5.1.2"/>
    </reaction>
</comment>
<comment type="cofactor">
    <cofactor evidence="1">
        <name>Mg(2+)</name>
        <dbReference type="ChEBI" id="CHEBI:18420"/>
    </cofactor>
    <cofactor evidence="1">
        <name>Mn(2+)</name>
        <dbReference type="ChEBI" id="CHEBI:29035"/>
    </cofactor>
</comment>
<comment type="similarity">
    <text evidence="1">Belongs to the NAD-dependent DNA ligase family. LigA subfamily.</text>
</comment>
<proteinExistence type="inferred from homology"/>
<feature type="chain" id="PRO_0000313403" description="DNA ligase">
    <location>
        <begin position="1"/>
        <end position="714"/>
    </location>
</feature>
<feature type="domain" description="BRCT" evidence="1">
    <location>
        <begin position="637"/>
        <end position="714"/>
    </location>
</feature>
<feature type="active site" description="N6-AMP-lysine intermediate" evidence="1">
    <location>
        <position position="131"/>
    </location>
</feature>
<feature type="binding site" evidence="1">
    <location>
        <begin position="48"/>
        <end position="52"/>
    </location>
    <ligand>
        <name>NAD(+)</name>
        <dbReference type="ChEBI" id="CHEBI:57540"/>
    </ligand>
</feature>
<feature type="binding site" evidence="1">
    <location>
        <begin position="97"/>
        <end position="98"/>
    </location>
    <ligand>
        <name>NAD(+)</name>
        <dbReference type="ChEBI" id="CHEBI:57540"/>
    </ligand>
</feature>
<feature type="binding site" evidence="1">
    <location>
        <position position="129"/>
    </location>
    <ligand>
        <name>NAD(+)</name>
        <dbReference type="ChEBI" id="CHEBI:57540"/>
    </ligand>
</feature>
<feature type="binding site" evidence="1">
    <location>
        <position position="152"/>
    </location>
    <ligand>
        <name>NAD(+)</name>
        <dbReference type="ChEBI" id="CHEBI:57540"/>
    </ligand>
</feature>
<feature type="binding site" evidence="1">
    <location>
        <position position="189"/>
    </location>
    <ligand>
        <name>NAD(+)</name>
        <dbReference type="ChEBI" id="CHEBI:57540"/>
    </ligand>
</feature>
<feature type="binding site" evidence="1">
    <location>
        <position position="307"/>
    </location>
    <ligand>
        <name>NAD(+)</name>
        <dbReference type="ChEBI" id="CHEBI:57540"/>
    </ligand>
</feature>
<feature type="binding site" evidence="1">
    <location>
        <position position="331"/>
    </location>
    <ligand>
        <name>NAD(+)</name>
        <dbReference type="ChEBI" id="CHEBI:57540"/>
    </ligand>
</feature>
<feature type="binding site" evidence="1">
    <location>
        <position position="436"/>
    </location>
    <ligand>
        <name>Zn(2+)</name>
        <dbReference type="ChEBI" id="CHEBI:29105"/>
    </ligand>
</feature>
<feature type="binding site" evidence="1">
    <location>
        <position position="439"/>
    </location>
    <ligand>
        <name>Zn(2+)</name>
        <dbReference type="ChEBI" id="CHEBI:29105"/>
    </ligand>
</feature>
<feature type="binding site" evidence="1">
    <location>
        <position position="454"/>
    </location>
    <ligand>
        <name>Zn(2+)</name>
        <dbReference type="ChEBI" id="CHEBI:29105"/>
    </ligand>
</feature>
<feature type="binding site" evidence="1">
    <location>
        <position position="460"/>
    </location>
    <ligand>
        <name>Zn(2+)</name>
        <dbReference type="ChEBI" id="CHEBI:29105"/>
    </ligand>
</feature>
<keyword id="KW-0227">DNA damage</keyword>
<keyword id="KW-0234">DNA repair</keyword>
<keyword id="KW-0235">DNA replication</keyword>
<keyword id="KW-0436">Ligase</keyword>
<keyword id="KW-0460">Magnesium</keyword>
<keyword id="KW-0464">Manganese</keyword>
<keyword id="KW-0479">Metal-binding</keyword>
<keyword id="KW-0520">NAD</keyword>
<keyword id="KW-0862">Zinc</keyword>
<dbReference type="EC" id="6.5.1.2" evidence="1"/>
<dbReference type="EMBL" id="CP000283">
    <property type="protein sequence ID" value="ABE40605.1"/>
    <property type="molecule type" value="Genomic_DNA"/>
</dbReference>
<dbReference type="SMR" id="Q133Y4"/>
<dbReference type="STRING" id="316057.RPD_3381"/>
<dbReference type="KEGG" id="rpd:RPD_3381"/>
<dbReference type="eggNOG" id="COG0272">
    <property type="taxonomic scope" value="Bacteria"/>
</dbReference>
<dbReference type="HOGENOM" id="CLU_007764_2_0_5"/>
<dbReference type="BioCyc" id="RPAL316057:RPD_RS17005-MONOMER"/>
<dbReference type="Proteomes" id="UP000001818">
    <property type="component" value="Chromosome"/>
</dbReference>
<dbReference type="GO" id="GO:0005829">
    <property type="term" value="C:cytosol"/>
    <property type="evidence" value="ECO:0007669"/>
    <property type="project" value="TreeGrafter"/>
</dbReference>
<dbReference type="GO" id="GO:0003911">
    <property type="term" value="F:DNA ligase (NAD+) activity"/>
    <property type="evidence" value="ECO:0007669"/>
    <property type="project" value="UniProtKB-UniRule"/>
</dbReference>
<dbReference type="GO" id="GO:0046872">
    <property type="term" value="F:metal ion binding"/>
    <property type="evidence" value="ECO:0007669"/>
    <property type="project" value="UniProtKB-KW"/>
</dbReference>
<dbReference type="GO" id="GO:0006281">
    <property type="term" value="P:DNA repair"/>
    <property type="evidence" value="ECO:0007669"/>
    <property type="project" value="UniProtKB-KW"/>
</dbReference>
<dbReference type="GO" id="GO:0006260">
    <property type="term" value="P:DNA replication"/>
    <property type="evidence" value="ECO:0007669"/>
    <property type="project" value="UniProtKB-KW"/>
</dbReference>
<dbReference type="CDD" id="cd17748">
    <property type="entry name" value="BRCT_DNA_ligase_like"/>
    <property type="match status" value="1"/>
</dbReference>
<dbReference type="CDD" id="cd00114">
    <property type="entry name" value="LIGANc"/>
    <property type="match status" value="1"/>
</dbReference>
<dbReference type="FunFam" id="1.10.150.20:FF:000007">
    <property type="entry name" value="DNA ligase"/>
    <property type="match status" value="1"/>
</dbReference>
<dbReference type="FunFam" id="3.30.470.30:FF:000001">
    <property type="entry name" value="DNA ligase"/>
    <property type="match status" value="1"/>
</dbReference>
<dbReference type="FunFam" id="3.40.50.10190:FF:000054">
    <property type="entry name" value="DNA ligase"/>
    <property type="match status" value="1"/>
</dbReference>
<dbReference type="Gene3D" id="6.20.10.30">
    <property type="match status" value="1"/>
</dbReference>
<dbReference type="Gene3D" id="1.10.150.20">
    <property type="entry name" value="5' to 3' exonuclease, C-terminal subdomain"/>
    <property type="match status" value="2"/>
</dbReference>
<dbReference type="Gene3D" id="3.40.50.10190">
    <property type="entry name" value="BRCT domain"/>
    <property type="match status" value="1"/>
</dbReference>
<dbReference type="Gene3D" id="3.30.470.30">
    <property type="entry name" value="DNA ligase/mRNA capping enzyme"/>
    <property type="match status" value="1"/>
</dbReference>
<dbReference type="Gene3D" id="1.10.287.610">
    <property type="entry name" value="Helix hairpin bin"/>
    <property type="match status" value="1"/>
</dbReference>
<dbReference type="Gene3D" id="2.40.50.140">
    <property type="entry name" value="Nucleic acid-binding proteins"/>
    <property type="match status" value="1"/>
</dbReference>
<dbReference type="HAMAP" id="MF_01588">
    <property type="entry name" value="DNA_ligase_A"/>
    <property type="match status" value="1"/>
</dbReference>
<dbReference type="InterPro" id="IPR001357">
    <property type="entry name" value="BRCT_dom"/>
</dbReference>
<dbReference type="InterPro" id="IPR036420">
    <property type="entry name" value="BRCT_dom_sf"/>
</dbReference>
<dbReference type="InterPro" id="IPR041663">
    <property type="entry name" value="DisA/LigA_HHH"/>
</dbReference>
<dbReference type="InterPro" id="IPR001679">
    <property type="entry name" value="DNA_ligase"/>
</dbReference>
<dbReference type="InterPro" id="IPR018239">
    <property type="entry name" value="DNA_ligase_AS"/>
</dbReference>
<dbReference type="InterPro" id="IPR033136">
    <property type="entry name" value="DNA_ligase_CS"/>
</dbReference>
<dbReference type="InterPro" id="IPR013839">
    <property type="entry name" value="DNAligase_adenylation"/>
</dbReference>
<dbReference type="InterPro" id="IPR013840">
    <property type="entry name" value="DNAligase_N"/>
</dbReference>
<dbReference type="InterPro" id="IPR012340">
    <property type="entry name" value="NA-bd_OB-fold"/>
</dbReference>
<dbReference type="InterPro" id="IPR004150">
    <property type="entry name" value="NAD_DNA_ligase_OB"/>
</dbReference>
<dbReference type="InterPro" id="IPR010994">
    <property type="entry name" value="RuvA_2-like"/>
</dbReference>
<dbReference type="InterPro" id="IPR004149">
    <property type="entry name" value="Znf_DNAligase_C4"/>
</dbReference>
<dbReference type="NCBIfam" id="TIGR00575">
    <property type="entry name" value="dnlj"/>
    <property type="match status" value="1"/>
</dbReference>
<dbReference type="NCBIfam" id="NF005932">
    <property type="entry name" value="PRK07956.1"/>
    <property type="match status" value="1"/>
</dbReference>
<dbReference type="PANTHER" id="PTHR23389">
    <property type="entry name" value="CHROMOSOME TRANSMISSION FIDELITY FACTOR 18"/>
    <property type="match status" value="1"/>
</dbReference>
<dbReference type="PANTHER" id="PTHR23389:SF9">
    <property type="entry name" value="DNA LIGASE"/>
    <property type="match status" value="1"/>
</dbReference>
<dbReference type="Pfam" id="PF00533">
    <property type="entry name" value="BRCT"/>
    <property type="match status" value="1"/>
</dbReference>
<dbReference type="Pfam" id="PF01653">
    <property type="entry name" value="DNA_ligase_aden"/>
    <property type="match status" value="1"/>
</dbReference>
<dbReference type="Pfam" id="PF03120">
    <property type="entry name" value="DNA_ligase_OB"/>
    <property type="match status" value="1"/>
</dbReference>
<dbReference type="Pfam" id="PF03119">
    <property type="entry name" value="DNA_ligase_ZBD"/>
    <property type="match status" value="1"/>
</dbReference>
<dbReference type="Pfam" id="PF12826">
    <property type="entry name" value="HHH_2"/>
    <property type="match status" value="1"/>
</dbReference>
<dbReference type="PIRSF" id="PIRSF001604">
    <property type="entry name" value="LigA"/>
    <property type="match status" value="1"/>
</dbReference>
<dbReference type="SMART" id="SM00292">
    <property type="entry name" value="BRCT"/>
    <property type="match status" value="1"/>
</dbReference>
<dbReference type="SMART" id="SM00532">
    <property type="entry name" value="LIGANc"/>
    <property type="match status" value="1"/>
</dbReference>
<dbReference type="SUPFAM" id="SSF52113">
    <property type="entry name" value="BRCT domain"/>
    <property type="match status" value="1"/>
</dbReference>
<dbReference type="SUPFAM" id="SSF56091">
    <property type="entry name" value="DNA ligase/mRNA capping enzyme, catalytic domain"/>
    <property type="match status" value="1"/>
</dbReference>
<dbReference type="SUPFAM" id="SSF50249">
    <property type="entry name" value="Nucleic acid-binding proteins"/>
    <property type="match status" value="1"/>
</dbReference>
<dbReference type="SUPFAM" id="SSF47781">
    <property type="entry name" value="RuvA domain 2-like"/>
    <property type="match status" value="1"/>
</dbReference>
<dbReference type="PROSITE" id="PS50172">
    <property type="entry name" value="BRCT"/>
    <property type="match status" value="1"/>
</dbReference>
<dbReference type="PROSITE" id="PS01055">
    <property type="entry name" value="DNA_LIGASE_N1"/>
    <property type="match status" value="1"/>
</dbReference>
<dbReference type="PROSITE" id="PS01056">
    <property type="entry name" value="DNA_LIGASE_N2"/>
    <property type="match status" value="1"/>
</dbReference>